<name>CYSNC_PSEAE</name>
<accession>O50274</accession>
<dbReference type="EC" id="2.7.7.4"/>
<dbReference type="EC" id="2.7.1.25"/>
<dbReference type="EMBL" id="AF035608">
    <property type="protein sequence ID" value="AAC46387.1"/>
    <property type="molecule type" value="Genomic_DNA"/>
</dbReference>
<dbReference type="EMBL" id="AE004091">
    <property type="protein sequence ID" value="AAG07830.1"/>
    <property type="molecule type" value="Genomic_DNA"/>
</dbReference>
<dbReference type="PIR" id="D83091">
    <property type="entry name" value="D83091"/>
</dbReference>
<dbReference type="RefSeq" id="NP_253132.1">
    <property type="nucleotide sequence ID" value="NC_002516.2"/>
</dbReference>
<dbReference type="RefSeq" id="WP_003110029.1">
    <property type="nucleotide sequence ID" value="NZ_QZGE01000004.1"/>
</dbReference>
<dbReference type="SMR" id="O50274"/>
<dbReference type="FunCoup" id="O50274">
    <property type="interactions" value="480"/>
</dbReference>
<dbReference type="STRING" id="208964.PA4442"/>
<dbReference type="PaxDb" id="208964-PA4442"/>
<dbReference type="GeneID" id="880979"/>
<dbReference type="KEGG" id="pae:PA4442"/>
<dbReference type="PATRIC" id="fig|208964.12.peg.4651"/>
<dbReference type="PseudoCAP" id="PA4442"/>
<dbReference type="HOGENOM" id="CLU_007265_5_3_6"/>
<dbReference type="InParanoid" id="O50274"/>
<dbReference type="OrthoDB" id="9804504at2"/>
<dbReference type="PhylomeDB" id="O50274"/>
<dbReference type="BioCyc" id="PAER208964:G1FZ6-4530-MONOMER"/>
<dbReference type="UniPathway" id="UPA00140">
    <property type="reaction ID" value="UER00204"/>
</dbReference>
<dbReference type="UniPathway" id="UPA00140">
    <property type="reaction ID" value="UER00205"/>
</dbReference>
<dbReference type="Proteomes" id="UP000002438">
    <property type="component" value="Chromosome"/>
</dbReference>
<dbReference type="GO" id="GO:0004020">
    <property type="term" value="F:adenylylsulfate kinase activity"/>
    <property type="evidence" value="ECO:0007669"/>
    <property type="project" value="UniProtKB-UniRule"/>
</dbReference>
<dbReference type="GO" id="GO:0005524">
    <property type="term" value="F:ATP binding"/>
    <property type="evidence" value="ECO:0007669"/>
    <property type="project" value="UniProtKB-UniRule"/>
</dbReference>
<dbReference type="GO" id="GO:0005525">
    <property type="term" value="F:GTP binding"/>
    <property type="evidence" value="ECO:0007669"/>
    <property type="project" value="UniProtKB-UniRule"/>
</dbReference>
<dbReference type="GO" id="GO:0003924">
    <property type="term" value="F:GTPase activity"/>
    <property type="evidence" value="ECO:0007669"/>
    <property type="project" value="InterPro"/>
</dbReference>
<dbReference type="GO" id="GO:0004781">
    <property type="term" value="F:sulfate adenylyltransferase (ATP) activity"/>
    <property type="evidence" value="ECO:0007669"/>
    <property type="project" value="UniProtKB-UniRule"/>
</dbReference>
<dbReference type="GO" id="GO:0009970">
    <property type="term" value="P:cellular response to sulfate starvation"/>
    <property type="evidence" value="ECO:0000314"/>
    <property type="project" value="PseudoCAP"/>
</dbReference>
<dbReference type="GO" id="GO:0070814">
    <property type="term" value="P:hydrogen sulfide biosynthetic process"/>
    <property type="evidence" value="ECO:0007669"/>
    <property type="project" value="UniProtKB-UniRule"/>
</dbReference>
<dbReference type="GO" id="GO:0000103">
    <property type="term" value="P:sulfate assimilation"/>
    <property type="evidence" value="ECO:0007669"/>
    <property type="project" value="UniProtKB-UniRule"/>
</dbReference>
<dbReference type="GO" id="GO:0006790">
    <property type="term" value="P:sulfur compound metabolic process"/>
    <property type="evidence" value="ECO:0000318"/>
    <property type="project" value="GO_Central"/>
</dbReference>
<dbReference type="CDD" id="cd02027">
    <property type="entry name" value="APSK"/>
    <property type="match status" value="1"/>
</dbReference>
<dbReference type="CDD" id="cd04166">
    <property type="entry name" value="CysN_ATPS"/>
    <property type="match status" value="1"/>
</dbReference>
<dbReference type="CDD" id="cd03695">
    <property type="entry name" value="CysN_NodQ_II"/>
    <property type="match status" value="1"/>
</dbReference>
<dbReference type="CDD" id="cd04095">
    <property type="entry name" value="CysN_NoDQ_III"/>
    <property type="match status" value="1"/>
</dbReference>
<dbReference type="FunFam" id="2.40.30.10:FF:000027">
    <property type="entry name" value="Sulfate adenylyltransferase subunit 1"/>
    <property type="match status" value="1"/>
</dbReference>
<dbReference type="FunFam" id="2.40.30.10:FF:000031">
    <property type="entry name" value="Sulfate adenylyltransferase subunit 1"/>
    <property type="match status" value="1"/>
</dbReference>
<dbReference type="FunFam" id="3.40.50.300:FF:000119">
    <property type="entry name" value="Sulfate adenylyltransferase subunit 1"/>
    <property type="match status" value="1"/>
</dbReference>
<dbReference type="FunFam" id="3.40.50.300:FF:002377">
    <property type="entry name" value="Sulfate adenylyltransferase subunit 1"/>
    <property type="match status" value="1"/>
</dbReference>
<dbReference type="Gene3D" id="3.40.50.300">
    <property type="entry name" value="P-loop containing nucleotide triphosphate hydrolases"/>
    <property type="match status" value="2"/>
</dbReference>
<dbReference type="Gene3D" id="2.40.30.10">
    <property type="entry name" value="Translation factors"/>
    <property type="match status" value="2"/>
</dbReference>
<dbReference type="HAMAP" id="MF_00065">
    <property type="entry name" value="Adenylyl_sulf_kinase"/>
    <property type="match status" value="1"/>
</dbReference>
<dbReference type="HAMAP" id="MF_00062">
    <property type="entry name" value="Sulf_adenylyltr_sub1"/>
    <property type="match status" value="1"/>
</dbReference>
<dbReference type="InterPro" id="IPR002891">
    <property type="entry name" value="APS_kinase"/>
</dbReference>
<dbReference type="InterPro" id="IPR041757">
    <property type="entry name" value="CysN_GTP-bd"/>
</dbReference>
<dbReference type="InterPro" id="IPR044138">
    <property type="entry name" value="CysN_II"/>
</dbReference>
<dbReference type="InterPro" id="IPR044139">
    <property type="entry name" value="CysN_NoDQ_III"/>
</dbReference>
<dbReference type="InterPro" id="IPR031157">
    <property type="entry name" value="G_TR_CS"/>
</dbReference>
<dbReference type="InterPro" id="IPR054696">
    <property type="entry name" value="GTP-eEF1A_C"/>
</dbReference>
<dbReference type="InterPro" id="IPR027417">
    <property type="entry name" value="P-loop_NTPase"/>
</dbReference>
<dbReference type="InterPro" id="IPR005225">
    <property type="entry name" value="Small_GTP-bd"/>
</dbReference>
<dbReference type="InterPro" id="IPR011779">
    <property type="entry name" value="SO4_adenylTrfase_lsu"/>
</dbReference>
<dbReference type="InterPro" id="IPR000795">
    <property type="entry name" value="T_Tr_GTP-bd_dom"/>
</dbReference>
<dbReference type="InterPro" id="IPR050100">
    <property type="entry name" value="TRAFAC_GTPase_members"/>
</dbReference>
<dbReference type="InterPro" id="IPR009000">
    <property type="entry name" value="Transl_B-barrel_sf"/>
</dbReference>
<dbReference type="InterPro" id="IPR009001">
    <property type="entry name" value="Transl_elong_EF1A/Init_IF2_C"/>
</dbReference>
<dbReference type="NCBIfam" id="TIGR00455">
    <property type="entry name" value="apsK"/>
    <property type="match status" value="1"/>
</dbReference>
<dbReference type="NCBIfam" id="TIGR02034">
    <property type="entry name" value="CysN"/>
    <property type="match status" value="1"/>
</dbReference>
<dbReference type="NCBIfam" id="NF003478">
    <property type="entry name" value="PRK05124.1"/>
    <property type="match status" value="1"/>
</dbReference>
<dbReference type="NCBIfam" id="NF004035">
    <property type="entry name" value="PRK05506.1"/>
    <property type="match status" value="1"/>
</dbReference>
<dbReference type="NCBIfam" id="TIGR00231">
    <property type="entry name" value="small_GTP"/>
    <property type="match status" value="1"/>
</dbReference>
<dbReference type="PANTHER" id="PTHR23115">
    <property type="entry name" value="TRANSLATION FACTOR"/>
    <property type="match status" value="1"/>
</dbReference>
<dbReference type="Pfam" id="PF01583">
    <property type="entry name" value="APS_kinase"/>
    <property type="match status" value="1"/>
</dbReference>
<dbReference type="Pfam" id="PF22594">
    <property type="entry name" value="GTP-eEF1A_C"/>
    <property type="match status" value="1"/>
</dbReference>
<dbReference type="Pfam" id="PF00009">
    <property type="entry name" value="GTP_EFTU"/>
    <property type="match status" value="1"/>
</dbReference>
<dbReference type="PRINTS" id="PR00315">
    <property type="entry name" value="ELONGATNFCT"/>
</dbReference>
<dbReference type="SUPFAM" id="SSF50465">
    <property type="entry name" value="EF-Tu/eEF-1alpha/eIF2-gamma C-terminal domain"/>
    <property type="match status" value="1"/>
</dbReference>
<dbReference type="SUPFAM" id="SSF52540">
    <property type="entry name" value="P-loop containing nucleoside triphosphate hydrolases"/>
    <property type="match status" value="2"/>
</dbReference>
<dbReference type="SUPFAM" id="SSF50447">
    <property type="entry name" value="Translation proteins"/>
    <property type="match status" value="1"/>
</dbReference>
<dbReference type="PROSITE" id="PS00301">
    <property type="entry name" value="G_TR_1"/>
    <property type="match status" value="1"/>
</dbReference>
<dbReference type="PROSITE" id="PS51722">
    <property type="entry name" value="G_TR_2"/>
    <property type="match status" value="1"/>
</dbReference>
<feature type="chain" id="PRO_0000091538" description="Bifunctional enzyme CysN/CysC">
    <location>
        <begin position="1"/>
        <end position="633"/>
    </location>
</feature>
<feature type="domain" description="tr-type G">
    <location>
        <begin position="22"/>
        <end position="241"/>
    </location>
</feature>
<feature type="region of interest" description="Sulfate adenylyltransferase">
    <location>
        <begin position="1"/>
        <end position="463"/>
    </location>
</feature>
<feature type="region of interest" description="G1" evidence="1">
    <location>
        <begin position="31"/>
        <end position="38"/>
    </location>
</feature>
<feature type="region of interest" description="G2" evidence="1">
    <location>
        <begin position="89"/>
        <end position="93"/>
    </location>
</feature>
<feature type="region of interest" description="G3" evidence="1">
    <location>
        <begin position="110"/>
        <end position="113"/>
    </location>
</feature>
<feature type="region of interest" description="G4" evidence="1">
    <location>
        <begin position="165"/>
        <end position="168"/>
    </location>
</feature>
<feature type="region of interest" description="G5" evidence="1">
    <location>
        <begin position="204"/>
        <end position="206"/>
    </location>
</feature>
<feature type="region of interest" description="Adenylyl-sulfate kinase">
    <location>
        <begin position="464"/>
        <end position="633"/>
    </location>
</feature>
<feature type="binding site" evidence="1">
    <location>
        <begin position="31"/>
        <end position="38"/>
    </location>
    <ligand>
        <name>GTP</name>
        <dbReference type="ChEBI" id="CHEBI:37565"/>
    </ligand>
</feature>
<feature type="binding site" evidence="1">
    <location>
        <begin position="110"/>
        <end position="114"/>
    </location>
    <ligand>
        <name>GTP</name>
        <dbReference type="ChEBI" id="CHEBI:37565"/>
    </ligand>
</feature>
<feature type="binding site" evidence="1">
    <location>
        <begin position="165"/>
        <end position="168"/>
    </location>
    <ligand>
        <name>GTP</name>
        <dbReference type="ChEBI" id="CHEBI:37565"/>
    </ligand>
</feature>
<feature type="binding site" evidence="2">
    <location>
        <begin position="472"/>
        <end position="479"/>
    </location>
    <ligand>
        <name>ATP</name>
        <dbReference type="ChEBI" id="CHEBI:30616"/>
    </ligand>
</feature>
<gene>
    <name type="primary">cysNC</name>
    <name type="synonym">cysN</name>
    <name type="ordered locus">PA4442</name>
</gene>
<sequence>MSHQSDLISEDILAYLGQHERKELLRFLTCGNVDDGKSTLIGRLLHDSKMIYEDHLEAITRDSKKVGTTGDDVDLALLVDGLQAEREQGITIDVAYRYFSTAKRKFIIADTPGHEQYTRNMATGASTCDLAIILIDARYGVQTQTRRHSFIASLLGIRHIVVAINKMDLKDFDQGVFEQIKADYLAFAEKIGLKTSSLHFVPMSALKGDNVVNKSERSPWYAGQSLMEILETVEIAADRNLDDMRFPVQYVNRPNLNFRGFAGTLASGVVRKGDEVVALPSGKGSKVKSIVTFEGELEQAGPGQAVTLTLEDEIDVSRGDMLVHADNRPLVTDGFDAMLVWMAEEPMLPGKKYDIKRATSYVPGSIPSIVHKVDVNTLERTPGSELKLNEIARVKVSLDAPIALDGYEQNRTTGAFIVIDRLTNGTVGAGMIVSAPPAAHGSSAHHGSNAHVTREERAGRFGQQPATVLFSGLSGAGKSTLAYAVERKLFDMGRAVYVLDGQNLRHDLNKGLPQDRAGRTENWLRTAHVAKQFNEAGLISLCAFVAPSAEGREQARALIGAERLITVYVQASPQVCRERDPQGLYAAGEDNIPGESFPYDVPLDADLVIDTQALSVEDGVKQVLDLLRERQAI</sequence>
<reference key="1">
    <citation type="journal article" date="1998" name="Microbiology">
        <title>Regulation of the sulfate starvation response in Pseudomonas aeruginosa: role of cysteine biosynthetic intermediates.</title>
        <authorList>
            <person name="Hummerjohann J."/>
            <person name="Kuttel E."/>
            <person name="Quadroni M."/>
            <person name="Ragaller J."/>
            <person name="Leisinger T."/>
            <person name="Kertesz M.A."/>
        </authorList>
    </citation>
    <scope>NUCLEOTIDE SEQUENCE [GENOMIC DNA]</scope>
    <source>
        <strain>ATCC 15692 / DSM 22644 / CIP 104116 / JCM 14847 / LMG 12228 / 1C / PRS 101 / PAO1</strain>
    </source>
</reference>
<reference key="2">
    <citation type="journal article" date="2000" name="Nature">
        <title>Complete genome sequence of Pseudomonas aeruginosa PAO1, an opportunistic pathogen.</title>
        <authorList>
            <person name="Stover C.K."/>
            <person name="Pham X.-Q.T."/>
            <person name="Erwin A.L."/>
            <person name="Mizoguchi S.D."/>
            <person name="Warrener P."/>
            <person name="Hickey M.J."/>
            <person name="Brinkman F.S.L."/>
            <person name="Hufnagle W.O."/>
            <person name="Kowalik D.J."/>
            <person name="Lagrou M."/>
            <person name="Garber R.L."/>
            <person name="Goltry L."/>
            <person name="Tolentino E."/>
            <person name="Westbrock-Wadman S."/>
            <person name="Yuan Y."/>
            <person name="Brody L.L."/>
            <person name="Coulter S.N."/>
            <person name="Folger K.R."/>
            <person name="Kas A."/>
            <person name="Larbig K."/>
            <person name="Lim R.M."/>
            <person name="Smith K.A."/>
            <person name="Spencer D.H."/>
            <person name="Wong G.K.-S."/>
            <person name="Wu Z."/>
            <person name="Paulsen I.T."/>
            <person name="Reizer J."/>
            <person name="Saier M.H. Jr."/>
            <person name="Hancock R.E.W."/>
            <person name="Lory S."/>
            <person name="Olson M.V."/>
        </authorList>
    </citation>
    <scope>NUCLEOTIDE SEQUENCE [LARGE SCALE GENOMIC DNA]</scope>
    <source>
        <strain>ATCC 15692 / DSM 22644 / CIP 104116 / JCM 14847 / LMG 12228 / 1C / PRS 101 / PAO1</strain>
    </source>
</reference>
<organism>
    <name type="scientific">Pseudomonas aeruginosa (strain ATCC 15692 / DSM 22644 / CIP 104116 / JCM 14847 / LMG 12228 / 1C / PRS 101 / PAO1)</name>
    <dbReference type="NCBI Taxonomy" id="208964"/>
    <lineage>
        <taxon>Bacteria</taxon>
        <taxon>Pseudomonadati</taxon>
        <taxon>Pseudomonadota</taxon>
        <taxon>Gammaproteobacteria</taxon>
        <taxon>Pseudomonadales</taxon>
        <taxon>Pseudomonadaceae</taxon>
        <taxon>Pseudomonas</taxon>
    </lineage>
</organism>
<comment type="function">
    <text evidence="1">With CysD forms the ATP sulfurylase (ATPS) that catalyzes the adenylation of sulfate producing adenosine 5'-phosphosulfate (APS) and diphosphate, the first enzymatic step in sulfur assimilation pathway. APS synthesis involves the formation of a high-energy phosphoric-sulfuric acid anhydride bond driven by GTP hydrolysis by CysN coupled to ATP hydrolysis by CysD.</text>
</comment>
<comment type="function">
    <text evidence="1">APS kinase catalyzes the synthesis of activated sulfate.</text>
</comment>
<comment type="catalytic activity">
    <reaction>
        <text>sulfate + ATP + H(+) = adenosine 5'-phosphosulfate + diphosphate</text>
        <dbReference type="Rhea" id="RHEA:18133"/>
        <dbReference type="ChEBI" id="CHEBI:15378"/>
        <dbReference type="ChEBI" id="CHEBI:16189"/>
        <dbReference type="ChEBI" id="CHEBI:30616"/>
        <dbReference type="ChEBI" id="CHEBI:33019"/>
        <dbReference type="ChEBI" id="CHEBI:58243"/>
        <dbReference type="EC" id="2.7.7.4"/>
    </reaction>
</comment>
<comment type="catalytic activity">
    <reaction>
        <text>adenosine 5'-phosphosulfate + ATP = 3'-phosphoadenylyl sulfate + ADP + H(+)</text>
        <dbReference type="Rhea" id="RHEA:24152"/>
        <dbReference type="ChEBI" id="CHEBI:15378"/>
        <dbReference type="ChEBI" id="CHEBI:30616"/>
        <dbReference type="ChEBI" id="CHEBI:58243"/>
        <dbReference type="ChEBI" id="CHEBI:58339"/>
        <dbReference type="ChEBI" id="CHEBI:456216"/>
        <dbReference type="EC" id="2.7.1.25"/>
    </reaction>
</comment>
<comment type="pathway">
    <text>Sulfur metabolism; hydrogen sulfide biosynthesis; sulfite from sulfate: step 1/3.</text>
</comment>
<comment type="pathway">
    <text>Sulfur metabolism; hydrogen sulfide biosynthesis; sulfite from sulfate: step 2/3.</text>
</comment>
<comment type="subunit">
    <text evidence="1">Heterodimer composed of CysD, the smaller subunit, and CysNC.</text>
</comment>
<comment type="similarity">
    <text evidence="3">In the C-terminal section; belongs to the APS kinase family.</text>
</comment>
<comment type="similarity">
    <text evidence="3">In the N-terminal section; belongs to the TRAFAC class translation factor GTPase superfamily. Classic translation factor GTPase family. CysN/NodQ subfamily.</text>
</comment>
<comment type="caution">
    <text evidence="3">It is not obvious if the APS kinase domain is functional; the conserved active site serine (position 546) is replaced by an alanine. Furthermore P.aeruginosa seems to harbor a bona fide single domain APS kinase (CysC).</text>
</comment>
<evidence type="ECO:0000250" key="1"/>
<evidence type="ECO:0000255" key="2"/>
<evidence type="ECO:0000305" key="3"/>
<proteinExistence type="inferred from homology"/>
<keyword id="KW-0067">ATP-binding</keyword>
<keyword id="KW-0342">GTP-binding</keyword>
<keyword id="KW-0418">Kinase</keyword>
<keyword id="KW-0511">Multifunctional enzyme</keyword>
<keyword id="KW-0547">Nucleotide-binding</keyword>
<keyword id="KW-0548">Nucleotidyltransferase</keyword>
<keyword id="KW-1185">Reference proteome</keyword>
<keyword id="KW-0808">Transferase</keyword>
<protein>
    <recommendedName>
        <fullName>Bifunctional enzyme CysN/CysC</fullName>
    </recommendedName>
    <domain>
        <recommendedName>
            <fullName>Sulfate adenylyltransferase subunit 1</fullName>
            <ecNumber>2.7.7.4</ecNumber>
        </recommendedName>
        <alternativeName>
            <fullName>ATP-sulfurylase large subunit</fullName>
        </alternativeName>
        <alternativeName>
            <fullName>Sulfate adenylate transferase</fullName>
            <shortName>SAT</shortName>
        </alternativeName>
    </domain>
    <domain>
        <recommendedName>
            <fullName>Adenylyl-sulfate kinase</fullName>
            <ecNumber>2.7.1.25</ecNumber>
        </recommendedName>
        <alternativeName>
            <fullName>APS kinase</fullName>
        </alternativeName>
        <alternativeName>
            <fullName>ATP adenosine-5'-phosphosulfate 3'-phosphotransferase</fullName>
        </alternativeName>
    </domain>
</protein>